<reference key="1">
    <citation type="journal article" date="1986" name="J. Biol. Chem.">
        <title>The complete amino acid sequence of giant multisubunit hemoglobin from the polychaete Tylorrhynchus heterochaetus.</title>
        <authorList>
            <person name="Suzuki T."/>
            <person name="Gotoh T."/>
        </authorList>
    </citation>
    <scope>PROTEIN SEQUENCE</scope>
</reference>
<reference key="2">
    <citation type="journal article" date="1988" name="J. Biol. Chem.">
        <title>Novel S-S loops in the giant hemoglobin of Tylorrhynchus heterochaetus.</title>
        <authorList>
            <person name="Suzuki T."/>
            <person name="Kapp O.H."/>
            <person name="Gotoh T."/>
        </authorList>
    </citation>
    <scope>DISULFIDE BONDS</scope>
</reference>
<feature type="chain" id="PRO_0000052513" description="Extracellular globin-2A">
    <location>
        <begin position="1"/>
        <end position="146"/>
    </location>
</feature>
<feature type="domain" description="Globin" evidence="1">
    <location>
        <begin position="4"/>
        <end position="146"/>
    </location>
</feature>
<feature type="binding site" description="proximal binding residue" evidence="1">
    <location>
        <position position="97"/>
    </location>
    <ligand>
        <name>heme b</name>
        <dbReference type="ChEBI" id="CHEBI:60344"/>
    </ligand>
    <ligandPart>
        <name>Fe</name>
        <dbReference type="ChEBI" id="CHEBI:18248"/>
    </ligandPart>
</feature>
<feature type="disulfide bond" evidence="2">
    <location>
        <begin position="5"/>
        <end position="134"/>
    </location>
</feature>
<feature type="disulfide bond" description="Interchain (with chain IIC)" evidence="2">
    <location>
        <position position="125"/>
    </location>
</feature>
<keyword id="KW-0903">Direct protein sequencing</keyword>
<keyword id="KW-1015">Disulfide bond</keyword>
<keyword id="KW-0349">Heme</keyword>
<keyword id="KW-0408">Iron</keyword>
<keyword id="KW-0479">Metal-binding</keyword>
<keyword id="KW-0561">Oxygen transport</keyword>
<keyword id="KW-0813">Transport</keyword>
<sequence length="146" mass="16602">SSDHCGPLQRLKVKQQWAKAYGVGHERVELGIALWKSMFAQDNDARDLFKRVHGEDVHSPAFEAHMARVFNGLDRVISSLTDEPVLNAQLEHLRQQHIKLGITGHMFNLMRTGLAYVLPAQLGRCFDKEAWAACWDEVIYPGIKHD</sequence>
<dbReference type="PIR" id="A24811">
    <property type="entry name" value="A24811"/>
</dbReference>
<dbReference type="SMR" id="P09966"/>
<dbReference type="GO" id="GO:0005576">
    <property type="term" value="C:extracellular region"/>
    <property type="evidence" value="ECO:0007669"/>
    <property type="project" value="InterPro"/>
</dbReference>
<dbReference type="GO" id="GO:0005833">
    <property type="term" value="C:hemoglobin complex"/>
    <property type="evidence" value="ECO:0007669"/>
    <property type="project" value="InterPro"/>
</dbReference>
<dbReference type="GO" id="GO:0020037">
    <property type="term" value="F:heme binding"/>
    <property type="evidence" value="ECO:0007669"/>
    <property type="project" value="InterPro"/>
</dbReference>
<dbReference type="GO" id="GO:0005506">
    <property type="term" value="F:iron ion binding"/>
    <property type="evidence" value="ECO:0007669"/>
    <property type="project" value="InterPro"/>
</dbReference>
<dbReference type="GO" id="GO:0019825">
    <property type="term" value="F:oxygen binding"/>
    <property type="evidence" value="ECO:0007669"/>
    <property type="project" value="InterPro"/>
</dbReference>
<dbReference type="GO" id="GO:0005344">
    <property type="term" value="F:oxygen carrier activity"/>
    <property type="evidence" value="ECO:0007669"/>
    <property type="project" value="UniProtKB-KW"/>
</dbReference>
<dbReference type="CDD" id="cd01040">
    <property type="entry name" value="Mb-like"/>
    <property type="match status" value="1"/>
</dbReference>
<dbReference type="Gene3D" id="1.10.490.10">
    <property type="entry name" value="Globins"/>
    <property type="match status" value="1"/>
</dbReference>
<dbReference type="InterPro" id="IPR002336">
    <property type="entry name" value="Erythrocruorin"/>
</dbReference>
<dbReference type="InterPro" id="IPR000971">
    <property type="entry name" value="Globin"/>
</dbReference>
<dbReference type="InterPro" id="IPR009050">
    <property type="entry name" value="Globin-like_sf"/>
</dbReference>
<dbReference type="InterPro" id="IPR012292">
    <property type="entry name" value="Globin/Proto"/>
</dbReference>
<dbReference type="InterPro" id="IPR014610">
    <property type="entry name" value="Haemoglobin_extracell"/>
</dbReference>
<dbReference type="InterPro" id="IPR044399">
    <property type="entry name" value="Mb-like_M"/>
</dbReference>
<dbReference type="Pfam" id="PF00042">
    <property type="entry name" value="Globin"/>
    <property type="match status" value="1"/>
</dbReference>
<dbReference type="PIRSF" id="PIRSF036517">
    <property type="entry name" value="Ext_hemo"/>
    <property type="match status" value="1"/>
</dbReference>
<dbReference type="PRINTS" id="PR00611">
    <property type="entry name" value="ERYTHCRUORIN"/>
</dbReference>
<dbReference type="SUPFAM" id="SSF46458">
    <property type="entry name" value="Globin-like"/>
    <property type="match status" value="1"/>
</dbReference>
<dbReference type="PROSITE" id="PS01033">
    <property type="entry name" value="GLOBIN"/>
    <property type="match status" value="1"/>
</dbReference>
<name>GLB2_TYLHE</name>
<evidence type="ECO:0000255" key="1">
    <source>
        <dbReference type="PROSITE-ProRule" id="PRU00238"/>
    </source>
</evidence>
<evidence type="ECO:0000269" key="2">
    <source>
    </source>
</evidence>
<comment type="subunit">
    <text>Disulfide bonded trimer of chains IIA, IIB, and IIC.</text>
</comment>
<comment type="miscellaneous">
    <text>Giant hemoglobins of worms are formed of a monomeric subunit and a disulfide-bonded trimer.</text>
</comment>
<comment type="similarity">
    <text evidence="1">Belongs to the globin family.</text>
</comment>
<protein>
    <recommendedName>
        <fullName>Extracellular globin-2A</fullName>
    </recommendedName>
    <alternativeName>
        <fullName>Erythrocruorin</fullName>
    </alternativeName>
    <alternativeName>
        <fullName>Globin IIA</fullName>
    </alternativeName>
</protein>
<accession>P09966</accession>
<proteinExistence type="evidence at protein level"/>
<organism>
    <name type="scientific">Tylorrhynchus heterochetus</name>
    <name type="common">Japanese palolo worm</name>
    <name type="synonym">Nereis heterochaeta</name>
    <dbReference type="NCBI Taxonomy" id="3228785"/>
    <lineage>
        <taxon>Eukaryota</taxon>
        <taxon>Metazoa</taxon>
        <taxon>Spiralia</taxon>
        <taxon>Lophotrochozoa</taxon>
        <taxon>Annelida</taxon>
        <taxon>Polychaeta</taxon>
        <taxon>Errantia</taxon>
        <taxon>Phyllodocida</taxon>
        <taxon>Nereididae</taxon>
        <taxon>Tylorrhynchus</taxon>
    </lineage>
</organism>